<gene>
    <name evidence="1" type="primary">arc</name>
    <name type="ordered locus">RER_31790</name>
</gene>
<proteinExistence type="inferred from homology"/>
<name>ARC_RHOE4</name>
<keyword id="KW-0067">ATP-binding</keyword>
<keyword id="KW-0143">Chaperone</keyword>
<keyword id="KW-0175">Coiled coil</keyword>
<keyword id="KW-0547">Nucleotide-binding</keyword>
<keyword id="KW-0647">Proteasome</keyword>
<organism>
    <name type="scientific">Rhodococcus erythropolis (strain PR4 / NBRC 100887)</name>
    <dbReference type="NCBI Taxonomy" id="234621"/>
    <lineage>
        <taxon>Bacteria</taxon>
        <taxon>Bacillati</taxon>
        <taxon>Actinomycetota</taxon>
        <taxon>Actinomycetes</taxon>
        <taxon>Mycobacteriales</taxon>
        <taxon>Nocardiaceae</taxon>
        <taxon>Rhodococcus</taxon>
        <taxon>Rhodococcus erythropolis group</taxon>
    </lineage>
</organism>
<dbReference type="EMBL" id="AP008957">
    <property type="protein sequence ID" value="BAH33887.1"/>
    <property type="molecule type" value="Genomic_DNA"/>
</dbReference>
<dbReference type="RefSeq" id="WP_003944870.1">
    <property type="nucleotide sequence ID" value="NC_012490.1"/>
</dbReference>
<dbReference type="SMR" id="C0ZZV2"/>
<dbReference type="GeneID" id="93806137"/>
<dbReference type="KEGG" id="rer:RER_31790"/>
<dbReference type="eggNOG" id="COG1222">
    <property type="taxonomic scope" value="Bacteria"/>
</dbReference>
<dbReference type="HOGENOM" id="CLU_036054_0_0_11"/>
<dbReference type="UniPathway" id="UPA00997"/>
<dbReference type="Proteomes" id="UP000002204">
    <property type="component" value="Chromosome"/>
</dbReference>
<dbReference type="GO" id="GO:0000502">
    <property type="term" value="C:proteasome complex"/>
    <property type="evidence" value="ECO:0007669"/>
    <property type="project" value="UniProtKB-KW"/>
</dbReference>
<dbReference type="GO" id="GO:0005524">
    <property type="term" value="F:ATP binding"/>
    <property type="evidence" value="ECO:0007669"/>
    <property type="project" value="UniProtKB-UniRule"/>
</dbReference>
<dbReference type="GO" id="GO:0016887">
    <property type="term" value="F:ATP hydrolysis activity"/>
    <property type="evidence" value="ECO:0007669"/>
    <property type="project" value="UniProtKB-UniRule"/>
</dbReference>
<dbReference type="GO" id="GO:0019941">
    <property type="term" value="P:modification-dependent protein catabolic process"/>
    <property type="evidence" value="ECO:0007669"/>
    <property type="project" value="InterPro"/>
</dbReference>
<dbReference type="GO" id="GO:0010498">
    <property type="term" value="P:proteasomal protein catabolic process"/>
    <property type="evidence" value="ECO:0007669"/>
    <property type="project" value="InterPro"/>
</dbReference>
<dbReference type="FunFam" id="1.20.5.170:FF:000018">
    <property type="entry name" value="AAA ATPase forming ring-shaped complexes"/>
    <property type="match status" value="1"/>
</dbReference>
<dbReference type="FunFam" id="2.40.50.140:FF:000169">
    <property type="entry name" value="AAA ATPase forming ring-shaped complexes"/>
    <property type="match status" value="1"/>
</dbReference>
<dbReference type="FunFam" id="3.40.50.300:FF:000155">
    <property type="entry name" value="AAA ATPase forming ring-shaped complexes"/>
    <property type="match status" value="1"/>
</dbReference>
<dbReference type="Gene3D" id="1.10.8.60">
    <property type="match status" value="1"/>
</dbReference>
<dbReference type="Gene3D" id="1.20.5.170">
    <property type="match status" value="1"/>
</dbReference>
<dbReference type="Gene3D" id="2.40.50.140">
    <property type="entry name" value="Nucleic acid-binding proteins"/>
    <property type="match status" value="2"/>
</dbReference>
<dbReference type="Gene3D" id="3.40.50.300">
    <property type="entry name" value="P-loop containing nucleotide triphosphate hydrolases"/>
    <property type="match status" value="1"/>
</dbReference>
<dbReference type="HAMAP" id="MF_02112">
    <property type="entry name" value="ARC_ATPase"/>
    <property type="match status" value="1"/>
</dbReference>
<dbReference type="InterPro" id="IPR003593">
    <property type="entry name" value="AAA+_ATPase"/>
</dbReference>
<dbReference type="InterPro" id="IPR050168">
    <property type="entry name" value="AAA_ATPase_domain"/>
</dbReference>
<dbReference type="InterPro" id="IPR003959">
    <property type="entry name" value="ATPase_AAA_core"/>
</dbReference>
<dbReference type="InterPro" id="IPR003960">
    <property type="entry name" value="ATPase_AAA_CS"/>
</dbReference>
<dbReference type="InterPro" id="IPR012340">
    <property type="entry name" value="NA-bd_OB-fold"/>
</dbReference>
<dbReference type="InterPro" id="IPR027417">
    <property type="entry name" value="P-loop_NTPase"/>
</dbReference>
<dbReference type="InterPro" id="IPR032501">
    <property type="entry name" value="Prot_ATP_ID_OB_2nd"/>
</dbReference>
<dbReference type="InterPro" id="IPR041626">
    <property type="entry name" value="Prot_ATP_ID_OB_N"/>
</dbReference>
<dbReference type="InterPro" id="IPR022482">
    <property type="entry name" value="Proteasome_ATPase"/>
</dbReference>
<dbReference type="NCBIfam" id="TIGR03689">
    <property type="entry name" value="pup_AAA"/>
    <property type="match status" value="1"/>
</dbReference>
<dbReference type="PANTHER" id="PTHR23077">
    <property type="entry name" value="AAA-FAMILY ATPASE"/>
    <property type="match status" value="1"/>
</dbReference>
<dbReference type="PANTHER" id="PTHR23077:SF144">
    <property type="entry name" value="PROTEASOME-ASSOCIATED ATPASE"/>
    <property type="match status" value="1"/>
</dbReference>
<dbReference type="Pfam" id="PF00004">
    <property type="entry name" value="AAA"/>
    <property type="match status" value="1"/>
</dbReference>
<dbReference type="Pfam" id="PF16450">
    <property type="entry name" value="Prot_ATP_ID_OB_C"/>
    <property type="match status" value="1"/>
</dbReference>
<dbReference type="Pfam" id="PF17758">
    <property type="entry name" value="Prot_ATP_ID_OB_N"/>
    <property type="match status" value="1"/>
</dbReference>
<dbReference type="SMART" id="SM00382">
    <property type="entry name" value="AAA"/>
    <property type="match status" value="1"/>
</dbReference>
<dbReference type="SUPFAM" id="SSF52540">
    <property type="entry name" value="P-loop containing nucleoside triphosphate hydrolases"/>
    <property type="match status" value="1"/>
</dbReference>
<dbReference type="PROSITE" id="PS00674">
    <property type="entry name" value="AAA"/>
    <property type="match status" value="1"/>
</dbReference>
<protein>
    <recommendedName>
        <fullName evidence="1">Proteasome-associated ATPase</fullName>
    </recommendedName>
    <alternativeName>
        <fullName evidence="1">AAA ATPase forming ring-shaped complexes</fullName>
        <shortName evidence="1">ARC</shortName>
    </alternativeName>
    <alternativeName>
        <fullName evidence="1">Proteasomal ATPase</fullName>
    </alternativeName>
</protein>
<reference key="1">
    <citation type="submission" date="2005-03" db="EMBL/GenBank/DDBJ databases">
        <title>Comparison of the complete genome sequences of Rhodococcus erythropolis PR4 and Rhodococcus opacus B4.</title>
        <authorList>
            <person name="Takarada H."/>
            <person name="Sekine M."/>
            <person name="Hosoyama A."/>
            <person name="Yamada R."/>
            <person name="Fujisawa T."/>
            <person name="Omata S."/>
            <person name="Shimizu A."/>
            <person name="Tsukatani N."/>
            <person name="Tanikawa S."/>
            <person name="Fujita N."/>
            <person name="Harayama S."/>
        </authorList>
    </citation>
    <scope>NUCLEOTIDE SEQUENCE [LARGE SCALE GENOMIC DNA]</scope>
    <source>
        <strain>PR4 / NBRC 100887</strain>
    </source>
</reference>
<comment type="function">
    <text evidence="1">ATPase which is responsible for recognizing, binding, unfolding and translocation of pupylated proteins into the bacterial 20S proteasome core particle. May be essential for opening the gate of the 20S proteasome via an interaction with its C-terminus, thereby allowing substrate entry and access to the site of proteolysis. Thus, the C-termini of the proteasomal ATPase may function like a 'key in a lock' to induce gate opening and therefore regulate proteolysis.</text>
</comment>
<comment type="pathway">
    <text evidence="1">Protein degradation; proteasomal Pup-dependent pathway.</text>
</comment>
<comment type="subunit">
    <text evidence="1">Homohexamer. Assembles into a hexameric ring structure that caps the 20S proteasome core. Strongly interacts with the prokaryotic ubiquitin-like protein Pup through a hydrophobic interface; the interacting region of ARC lies in its N-terminal coiled-coil domain. There is one Pup binding site per ARC hexamer ring. Upon ATP-binding, the C-terminus of ARC interacts with the alpha-rings of the proteasome core, possibly by binding to the intersubunit pockets.</text>
</comment>
<comment type="domain">
    <text evidence="1">Consists of three main regions, an N-terminal coiled-coil domain that binds to protein Pup and functions as a docking station, an interdomain involved in ARC hexamerization, and a C-terminal ATPase domain of the AAA type.</text>
</comment>
<comment type="similarity">
    <text evidence="1">Belongs to the AAA ATPase family.</text>
</comment>
<accession>C0ZZV2</accession>
<sequence>MSSTENPDSVAAAEELHALRVEAQVLRRQLAQSPEQVRELESKVDSLSIRNSKLMDTLKEARQQLIALREEVDRLGQPPSGYGVLLSVHEDKTVDVFTSGRKMRLTCSPNIDTDTLALGQTVRLNEALTIVEAGTYEQVGEISTLREVLDDGLRALVVGHADEERIVWLAAPLAAVFADPEADIIAYDADSPTRKLRPGDSLLVDTKAGYAFERIPKAEVEDLVLEEVPDVHYDDIGGLGRQIEQIRDAVELPFLHKDLFHEYSLRPPKGVLLYGPPGCGKTLIAKAVANSLAKKIAEARGQDSKDAKSYFLNIKGPELLNKFVGETERHIRMIFQRAREKASEGTPVIVFFDEMDSIFRTRGSGVSSDVETTVVPQLLSEIDGVEGLENVIVIGASNREDMIDPAILRPGRLDVKIKIERPDAESAQDIFSKYLVDGLPINADDLAEFGGDRTACLKAMIVRVVDRMYAESEENRFLEVTYANGDKEVLFFKDFNSGAMIQNIVDRAKKYAIKSVLDTGAPGLRVQHLFDSIVDEFAENEDLPNTTNPDDWARISGKKGERIVYIRTLVTGKNASASRAIDTESNTGQYL</sequence>
<feature type="chain" id="PRO_0000397012" description="Proteasome-associated ATPase">
    <location>
        <begin position="1"/>
        <end position="591"/>
    </location>
</feature>
<feature type="region of interest" description="Docks into pockets in the proteasome alpha-ring" evidence="1">
    <location>
        <begin position="590"/>
        <end position="591"/>
    </location>
</feature>
<feature type="coiled-coil region" evidence="1">
    <location>
        <begin position="10"/>
        <end position="77"/>
    </location>
</feature>
<feature type="binding site" evidence="1">
    <location>
        <begin position="278"/>
        <end position="283"/>
    </location>
    <ligand>
        <name>ATP</name>
        <dbReference type="ChEBI" id="CHEBI:30616"/>
    </ligand>
</feature>
<evidence type="ECO:0000255" key="1">
    <source>
        <dbReference type="HAMAP-Rule" id="MF_02112"/>
    </source>
</evidence>